<gene>
    <name evidence="5" type="primary">acnA</name>
    <name type="ordered locus">bll0466</name>
</gene>
<evidence type="ECO:0000250" key="1">
    <source>
        <dbReference type="UniProtKB" id="P09339"/>
    </source>
</evidence>
<evidence type="ECO:0000250" key="2">
    <source>
        <dbReference type="UniProtKB" id="P36683"/>
    </source>
</evidence>
<evidence type="ECO:0000250" key="3">
    <source>
        <dbReference type="UniProtKB" id="Q8ZP52"/>
    </source>
</evidence>
<evidence type="ECO:0000269" key="4">
    <source>
    </source>
</evidence>
<evidence type="ECO:0000303" key="5">
    <source>
    </source>
</evidence>
<evidence type="ECO:0000305" key="6"/>
<feature type="chain" id="PRO_0000076656" description="Aconitate hydratase A">
    <location>
        <begin position="1"/>
        <end position="906"/>
    </location>
</feature>
<feature type="binding site" evidence="2">
    <location>
        <position position="443"/>
    </location>
    <ligand>
        <name>[4Fe-4S] cluster</name>
        <dbReference type="ChEBI" id="CHEBI:49883"/>
    </ligand>
</feature>
<feature type="binding site" evidence="2">
    <location>
        <position position="509"/>
    </location>
    <ligand>
        <name>[4Fe-4S] cluster</name>
        <dbReference type="ChEBI" id="CHEBI:49883"/>
    </ligand>
</feature>
<feature type="binding site" evidence="2">
    <location>
        <position position="512"/>
    </location>
    <ligand>
        <name>[4Fe-4S] cluster</name>
        <dbReference type="ChEBI" id="CHEBI:49883"/>
    </ligand>
</feature>
<feature type="sequence conflict" description="In Ref. 1; AAC44562." evidence="6" ref="1">
    <original>W</original>
    <variation>C</variation>
    <location>
        <position position="596"/>
    </location>
</feature>
<sequence length="906" mass="98322">MTSLDSFKCKKTLKVGAKTYVYYSLPTAEKNGLKGISKLPYSMKVLLENLLRNEDGRSVKKADIVAVSKWLRKKSLEHEIAFRPARVLMQDFTGVPAVVDLAAMRNAMQKLGGDAEKINPLVPVDLVIDHSVIVNFFGDNKAFAKNVTEEYKQNQERYEFLKWGQAAFSNFSVVPPGTGICHQVNLEYLSQTVWTKKEKMTVGKKTGTFEVAYPDSLVGTDSHTTMVNGLAVLGWGVGGIEAEACMLGQPLSMLLPNVVGFKLKGAMKEGVTATDLVLTVTQMLRKLGVVGKFVEFFGPGLDHLSVADKATIANMAPEYGATCGFFPVDAAAIDYLKTSGRAAPRVALVQAYAKAQGLFRTAKSADPVFTETLTLDLADVVPSMAGPKRPEGRIALPSVAEGFSVALANEYKKTEEPAKRFAVEGKKYEIGHGDVVIAAITSCTNTSNPSVLIGAGLLARNAAAKGLKAKPWVKTSLAPGSQVVAAYLADSGLQAHLDKVGFNLVGFGCTTCIGNSGPLPEEISKSINDNGIVAAAVLSGNRNFEGRVSPDVQANYLASPPLVVAHALAGSVTKNLAVEPLGEGKDGKPVYLKDIWPTSKEINAFMKKFVTASIFKKKYADVFKGDTNWRKIKTVESETYRWNMSSTYVQNPPYFEGMKKEPEPVTDIVEARILAMFGDKITTDHISPAGSIKLTSPAGKYLSEHQVRPADFNQYGTRRGNHEVMMRGTFANIRIKNFMLKGADGNIPEGGLTKHWPDGEQMSIYDAAMKYQQEQVPLVVFAGAEYGNGSSRDWAAKGTRLLGVRAVICQSFERIHRSNLVGMGVLPLTFEEGTSWSSLGLKGDEKVTLRGLVGDLKPRQKLTAEIVSGDGSLQRVSLLCRIDTLDELDYYRNGGILHYVLRKLAA</sequence>
<name>ACNA_BRADU</name>
<proteinExistence type="evidence at transcript level"/>
<organism>
    <name type="scientific">Bradyrhizobium diazoefficiens (strain JCM 10833 / BCRC 13528 / IAM 13628 / NBRC 14792 / USDA 110)</name>
    <dbReference type="NCBI Taxonomy" id="224911"/>
    <lineage>
        <taxon>Bacteria</taxon>
        <taxon>Pseudomonadati</taxon>
        <taxon>Pseudomonadota</taxon>
        <taxon>Alphaproteobacteria</taxon>
        <taxon>Hyphomicrobiales</taxon>
        <taxon>Nitrobacteraceae</taxon>
        <taxon>Bradyrhizobium</taxon>
    </lineage>
</organism>
<keyword id="KW-0004">4Fe-4S</keyword>
<keyword id="KW-0408">Iron</keyword>
<keyword id="KW-0411">Iron-sulfur</keyword>
<keyword id="KW-0456">Lyase</keyword>
<keyword id="KW-0479">Metal-binding</keyword>
<keyword id="KW-1185">Reference proteome</keyword>
<keyword id="KW-0694">RNA-binding</keyword>
<keyword id="KW-0816">Tricarboxylic acid cycle</keyword>
<protein>
    <recommendedName>
        <fullName evidence="5">Aconitate hydratase A</fullName>
        <shortName evidence="5">ACN</shortName>
        <shortName evidence="5">Aconitase</shortName>
        <ecNumber evidence="3">4.2.1.3</ecNumber>
    </recommendedName>
    <alternativeName>
        <fullName evidence="3">(2R,3S)-2-methylisocitrate dehydratase</fullName>
    </alternativeName>
    <alternativeName>
        <fullName evidence="3">(2S,3R)-3-hydroxybutane-1,2,3-tricarboxylate dehydratase</fullName>
    </alternativeName>
    <alternativeName>
        <fullName evidence="1">Iron-responsive protein-like</fullName>
        <shortName evidence="1">IRP-like</shortName>
    </alternativeName>
    <alternativeName>
        <fullName evidence="3">Probable 2-methyl-cis-aconitate hydratase</fullName>
        <ecNumber evidence="3">4.2.1.99</ecNumber>
    </alternativeName>
    <alternativeName>
        <fullName evidence="1">RNA-binding protein</fullName>
    </alternativeName>
</protein>
<accession>P70920</accession>
<reference key="1">
    <citation type="journal article" date="1996" name="J. Bacteriol.">
        <title>The Bradyrhizobium japonicum aconitase gene (acnA) is important for free-living growth but not for an effective root nodule symbiosis.</title>
        <authorList>
            <person name="Thoeny-Meyer L."/>
            <person name="Kuenzler P."/>
        </authorList>
    </citation>
    <scope>NUCLEOTIDE SEQUENCE [GENOMIC DNA]</scope>
    <scope>FUNCTION</scope>
    <scope>DISRUPTION PHENOTYPE</scope>
    <scope>INDUCTION</scope>
    <source>
        <strain>USDA 110spc4</strain>
    </source>
</reference>
<reference key="2">
    <citation type="journal article" date="1997" name="J. Bacteriol.">
        <authorList>
            <person name="Thoeny-Meyer L."/>
            <person name="Kuenzler P."/>
        </authorList>
    </citation>
    <scope>ERRATUM OF PUBMED:8892815</scope>
</reference>
<reference key="3">
    <citation type="journal article" date="2002" name="DNA Res.">
        <title>Complete genomic sequence of nitrogen-fixing symbiotic bacterium Bradyrhizobium japonicum USDA110.</title>
        <authorList>
            <person name="Kaneko T."/>
            <person name="Nakamura Y."/>
            <person name="Sato S."/>
            <person name="Minamisawa K."/>
            <person name="Uchiumi T."/>
            <person name="Sasamoto S."/>
            <person name="Watanabe A."/>
            <person name="Idesawa K."/>
            <person name="Iriguchi M."/>
            <person name="Kawashima K."/>
            <person name="Kohara M."/>
            <person name="Matsumoto M."/>
            <person name="Shimpo S."/>
            <person name="Tsuruoka H."/>
            <person name="Wada T."/>
            <person name="Yamada M."/>
            <person name="Tabata S."/>
        </authorList>
    </citation>
    <scope>NUCLEOTIDE SEQUENCE [LARGE SCALE GENOMIC DNA]</scope>
    <source>
        <strain>JCM 10833 / BCRC 13528 / IAM 13628 / NBRC 14792 / USDA 110</strain>
    </source>
</reference>
<comment type="function">
    <text evidence="1 3 4">Involved in the catabolism of short chain fatty acids (SCFA) via the tricarboxylic acid (TCA)(acetyl degradation route) and probably via the 2-methylcitrate cycle I (propionate degradation route). Catalyzes the reversible isomerization of citrate to isocitrate via cis-aconitate (PubMed:8892815). Could catalyze the hydration of 2-methyl-cis-aconitate to yield (2R,3S)-2-methylisocitrate. The apo form of AcnA functions as a RNA-binding regulatory protein (By similarity).</text>
</comment>
<comment type="catalytic activity">
    <reaction evidence="3">
        <text>citrate = D-threo-isocitrate</text>
        <dbReference type="Rhea" id="RHEA:10336"/>
        <dbReference type="ChEBI" id="CHEBI:15562"/>
        <dbReference type="ChEBI" id="CHEBI:16947"/>
        <dbReference type="EC" id="4.2.1.3"/>
    </reaction>
</comment>
<comment type="catalytic activity">
    <reaction evidence="3">
        <text>(2S,3R)-3-hydroxybutane-1,2,3-tricarboxylate = 2-methyl-cis-aconitate + H2O</text>
        <dbReference type="Rhea" id="RHEA:17941"/>
        <dbReference type="ChEBI" id="CHEBI:15377"/>
        <dbReference type="ChEBI" id="CHEBI:57429"/>
        <dbReference type="ChEBI" id="CHEBI:57872"/>
        <dbReference type="EC" id="4.2.1.99"/>
    </reaction>
</comment>
<comment type="cofactor">
    <cofactor evidence="1">
        <name>[4Fe-4S] cluster</name>
        <dbReference type="ChEBI" id="CHEBI:49883"/>
    </cofactor>
    <text evidence="1">Binds 1 [4Fe-4S] cluster per subunit.</text>
</comment>
<comment type="pathway">
    <text evidence="6">Carbohydrate metabolism; tricarboxylic acid cycle; isocitrate from oxaloacetate: step 2/2.</text>
</comment>
<comment type="pathway">
    <text evidence="6">Organic acid metabolism; propanoate degradation.</text>
</comment>
<comment type="subunit">
    <text evidence="1">Monomer.</text>
</comment>
<comment type="induction">
    <text evidence="4">Higher under aerobic conditions than under anaerobic conditions.</text>
</comment>
<comment type="disruption phenotype">
    <text evidence="4">Cells lacking this gene grow more slowly, but also reach a lower cell density than the wild-type. The ability of the mutant to establish an effective root nodule symbiosis with soybean plants is not affected.</text>
</comment>
<comment type="similarity">
    <text evidence="6">Belongs to the aconitase/IPM isomerase family.</text>
</comment>
<dbReference type="EC" id="4.2.1.3" evidence="3"/>
<dbReference type="EC" id="4.2.1.99" evidence="3"/>
<dbReference type="EMBL" id="U56817">
    <property type="protein sequence ID" value="AAC44562.1"/>
    <property type="molecule type" value="Genomic_DNA"/>
</dbReference>
<dbReference type="EMBL" id="BA000040">
    <property type="protein sequence ID" value="BAC45731.1"/>
    <property type="molecule type" value="Genomic_DNA"/>
</dbReference>
<dbReference type="RefSeq" id="NP_767106.1">
    <property type="nucleotide sequence ID" value="NC_004463.1"/>
</dbReference>
<dbReference type="RefSeq" id="WP_011083297.1">
    <property type="nucleotide sequence ID" value="NC_004463.1"/>
</dbReference>
<dbReference type="SMR" id="P70920"/>
<dbReference type="FunCoup" id="P70920">
    <property type="interactions" value="655"/>
</dbReference>
<dbReference type="STRING" id="224911.AAV28_41580"/>
<dbReference type="EnsemblBacteria" id="BAC45731">
    <property type="protein sequence ID" value="BAC45731"/>
    <property type="gene ID" value="BAC45731"/>
</dbReference>
<dbReference type="GeneID" id="46495612"/>
<dbReference type="KEGG" id="bja:bll0466"/>
<dbReference type="PATRIC" id="fig|224911.44.peg.8999"/>
<dbReference type="eggNOG" id="COG1048">
    <property type="taxonomic scope" value="Bacteria"/>
</dbReference>
<dbReference type="HOGENOM" id="CLU_013476_2_1_5"/>
<dbReference type="InParanoid" id="P70920"/>
<dbReference type="OrthoDB" id="9764318at2"/>
<dbReference type="PhylomeDB" id="P70920"/>
<dbReference type="UniPathway" id="UPA00223">
    <property type="reaction ID" value="UER00718"/>
</dbReference>
<dbReference type="UniPathway" id="UPA00946"/>
<dbReference type="Proteomes" id="UP000002526">
    <property type="component" value="Chromosome"/>
</dbReference>
<dbReference type="GO" id="GO:0005829">
    <property type="term" value="C:cytosol"/>
    <property type="evidence" value="ECO:0000318"/>
    <property type="project" value="GO_Central"/>
</dbReference>
<dbReference type="GO" id="GO:0047456">
    <property type="term" value="F:2-methylisocitrate dehydratase activity"/>
    <property type="evidence" value="ECO:0000250"/>
    <property type="project" value="UniProtKB"/>
</dbReference>
<dbReference type="GO" id="GO:0051539">
    <property type="term" value="F:4 iron, 4 sulfur cluster binding"/>
    <property type="evidence" value="ECO:0000250"/>
    <property type="project" value="UniProtKB"/>
</dbReference>
<dbReference type="GO" id="GO:0003994">
    <property type="term" value="F:aconitate hydratase activity"/>
    <property type="evidence" value="ECO:0000314"/>
    <property type="project" value="UniProtKB"/>
</dbReference>
<dbReference type="GO" id="GO:0030350">
    <property type="term" value="F:iron-responsive element binding"/>
    <property type="evidence" value="ECO:0000318"/>
    <property type="project" value="GO_Central"/>
</dbReference>
<dbReference type="GO" id="GO:0046872">
    <property type="term" value="F:metal ion binding"/>
    <property type="evidence" value="ECO:0007669"/>
    <property type="project" value="UniProtKB-KW"/>
</dbReference>
<dbReference type="GO" id="GO:0003730">
    <property type="term" value="F:mRNA 3'-UTR binding"/>
    <property type="evidence" value="ECO:0000250"/>
    <property type="project" value="UniProtKB"/>
</dbReference>
<dbReference type="GO" id="GO:0003729">
    <property type="term" value="F:mRNA binding"/>
    <property type="evidence" value="ECO:0000250"/>
    <property type="project" value="UniProtKB"/>
</dbReference>
<dbReference type="GO" id="GO:0019679">
    <property type="term" value="P:propionate metabolic process, methylcitrate cycle"/>
    <property type="evidence" value="ECO:0000250"/>
    <property type="project" value="UniProtKB"/>
</dbReference>
<dbReference type="GO" id="GO:0006099">
    <property type="term" value="P:tricarboxylic acid cycle"/>
    <property type="evidence" value="ECO:0000250"/>
    <property type="project" value="UniProtKB"/>
</dbReference>
<dbReference type="CDD" id="cd01586">
    <property type="entry name" value="AcnA_IRP"/>
    <property type="match status" value="1"/>
</dbReference>
<dbReference type="CDD" id="cd01580">
    <property type="entry name" value="AcnA_IRP_Swivel"/>
    <property type="match status" value="1"/>
</dbReference>
<dbReference type="FunFam" id="3.20.19.10:FF:000001">
    <property type="entry name" value="Aconitate hydratase"/>
    <property type="match status" value="1"/>
</dbReference>
<dbReference type="FunFam" id="3.30.499.10:FF:000002">
    <property type="entry name" value="Aconitate hydratase"/>
    <property type="match status" value="1"/>
</dbReference>
<dbReference type="FunFam" id="3.30.499.10:FF:000026">
    <property type="entry name" value="Aconitate hydratase"/>
    <property type="match status" value="1"/>
</dbReference>
<dbReference type="Gene3D" id="6.10.190.10">
    <property type="match status" value="1"/>
</dbReference>
<dbReference type="Gene3D" id="3.30.499.10">
    <property type="entry name" value="Aconitase, domain 3"/>
    <property type="match status" value="2"/>
</dbReference>
<dbReference type="Gene3D" id="3.20.19.10">
    <property type="entry name" value="Aconitase, domain 4"/>
    <property type="match status" value="1"/>
</dbReference>
<dbReference type="InterPro" id="IPR044137">
    <property type="entry name" value="AcnA_IRP_Swivel"/>
</dbReference>
<dbReference type="InterPro" id="IPR015931">
    <property type="entry name" value="Acnase/IPM_dHydase_lsu_aba_1/3"/>
</dbReference>
<dbReference type="InterPro" id="IPR001030">
    <property type="entry name" value="Acoase/IPM_deHydtase_lsu_aba"/>
</dbReference>
<dbReference type="InterPro" id="IPR015928">
    <property type="entry name" value="Aconitase/3IPM_dehydase_swvl"/>
</dbReference>
<dbReference type="InterPro" id="IPR006249">
    <property type="entry name" value="Aconitase/IRP2"/>
</dbReference>
<dbReference type="InterPro" id="IPR018136">
    <property type="entry name" value="Aconitase_4Fe-4S_BS"/>
</dbReference>
<dbReference type="InterPro" id="IPR036008">
    <property type="entry name" value="Aconitase_4Fe-4S_dom"/>
</dbReference>
<dbReference type="InterPro" id="IPR000573">
    <property type="entry name" value="AconitaseA/IPMdHydase_ssu_swvl"/>
</dbReference>
<dbReference type="NCBIfam" id="TIGR01341">
    <property type="entry name" value="aconitase_1"/>
    <property type="match status" value="1"/>
</dbReference>
<dbReference type="NCBIfam" id="NF006757">
    <property type="entry name" value="PRK09277.1"/>
    <property type="match status" value="1"/>
</dbReference>
<dbReference type="NCBIfam" id="NF009520">
    <property type="entry name" value="PRK12881.1"/>
    <property type="match status" value="1"/>
</dbReference>
<dbReference type="PANTHER" id="PTHR11670">
    <property type="entry name" value="ACONITASE/IRON-RESPONSIVE ELEMENT FAMILY MEMBER"/>
    <property type="match status" value="1"/>
</dbReference>
<dbReference type="Pfam" id="PF00330">
    <property type="entry name" value="Aconitase"/>
    <property type="match status" value="1"/>
</dbReference>
<dbReference type="Pfam" id="PF00694">
    <property type="entry name" value="Aconitase_C"/>
    <property type="match status" value="1"/>
</dbReference>
<dbReference type="PRINTS" id="PR00415">
    <property type="entry name" value="ACONITASE"/>
</dbReference>
<dbReference type="SUPFAM" id="SSF53732">
    <property type="entry name" value="Aconitase iron-sulfur domain"/>
    <property type="match status" value="1"/>
</dbReference>
<dbReference type="SUPFAM" id="SSF52016">
    <property type="entry name" value="LeuD/IlvD-like"/>
    <property type="match status" value="1"/>
</dbReference>
<dbReference type="PROSITE" id="PS00450">
    <property type="entry name" value="ACONITASE_1"/>
    <property type="match status" value="1"/>
</dbReference>
<dbReference type="PROSITE" id="PS01244">
    <property type="entry name" value="ACONITASE_2"/>
    <property type="match status" value="1"/>
</dbReference>